<accession>Q28HD5</accession>
<proteinExistence type="evidence at transcript level"/>
<protein>
    <recommendedName>
        <fullName>Sorting nexin-31</fullName>
    </recommendedName>
</protein>
<name>SNX31_XENTR</name>
<dbReference type="EMBL" id="CR760929">
    <property type="protein sequence ID" value="CAJ82327.1"/>
    <property type="molecule type" value="mRNA"/>
</dbReference>
<dbReference type="RefSeq" id="NP_001037914.1">
    <property type="nucleotide sequence ID" value="NM_001044449.1"/>
</dbReference>
<dbReference type="SMR" id="Q28HD5"/>
<dbReference type="FunCoup" id="Q28HD5">
    <property type="interactions" value="59"/>
</dbReference>
<dbReference type="STRING" id="8364.ENSXETP00000029180"/>
<dbReference type="PaxDb" id="8364-ENSXETP00000061995"/>
<dbReference type="GeneID" id="733525"/>
<dbReference type="KEGG" id="xtr:733525"/>
<dbReference type="AGR" id="Xenbase:XB-GENE-5933724"/>
<dbReference type="CTD" id="169166"/>
<dbReference type="Xenbase" id="XB-GENE-5933724">
    <property type="gene designation" value="snx31"/>
</dbReference>
<dbReference type="eggNOG" id="KOG3784">
    <property type="taxonomic scope" value="Eukaryota"/>
</dbReference>
<dbReference type="HOGENOM" id="CLU_041342_0_0_1"/>
<dbReference type="InParanoid" id="Q28HD5"/>
<dbReference type="OrthoDB" id="5772781at2759"/>
<dbReference type="Proteomes" id="UP000008143">
    <property type="component" value="Chromosome 6"/>
</dbReference>
<dbReference type="GO" id="GO:0035091">
    <property type="term" value="F:phosphatidylinositol binding"/>
    <property type="evidence" value="ECO:0007669"/>
    <property type="project" value="InterPro"/>
</dbReference>
<dbReference type="GO" id="GO:0015031">
    <property type="term" value="P:protein transport"/>
    <property type="evidence" value="ECO:0007669"/>
    <property type="project" value="UniProtKB-KW"/>
</dbReference>
<dbReference type="CDD" id="cd06885">
    <property type="entry name" value="PX_SNX17_31"/>
    <property type="match status" value="1"/>
</dbReference>
<dbReference type="FunFam" id="1.20.80.60:FF:000001">
    <property type="entry name" value="Sorting nexin-17 isoform1"/>
    <property type="match status" value="1"/>
</dbReference>
<dbReference type="FunFam" id="3.30.1520.10:FF:000008">
    <property type="entry name" value="Sorting nexin-17 isoform1"/>
    <property type="match status" value="1"/>
</dbReference>
<dbReference type="Gene3D" id="1.20.80.60">
    <property type="match status" value="1"/>
</dbReference>
<dbReference type="Gene3D" id="3.10.20.90">
    <property type="entry name" value="Phosphatidylinositol 3-kinase Catalytic Subunit, Chain A, domain 1"/>
    <property type="match status" value="1"/>
</dbReference>
<dbReference type="Gene3D" id="3.30.1520.10">
    <property type="entry name" value="Phox-like domain"/>
    <property type="match status" value="1"/>
</dbReference>
<dbReference type="Gene3D" id="2.30.29.30">
    <property type="entry name" value="Pleckstrin-homology domain (PH domain)/Phosphotyrosine-binding domain (PTB)"/>
    <property type="match status" value="1"/>
</dbReference>
<dbReference type="InterPro" id="IPR011993">
    <property type="entry name" value="PH-like_dom_sf"/>
</dbReference>
<dbReference type="InterPro" id="IPR001683">
    <property type="entry name" value="PX_dom"/>
</dbReference>
<dbReference type="InterPro" id="IPR036871">
    <property type="entry name" value="PX_dom_sf"/>
</dbReference>
<dbReference type="InterPro" id="IPR048763">
    <property type="entry name" value="SNX17-31_FERM_F1"/>
</dbReference>
<dbReference type="InterPro" id="IPR048767">
    <property type="entry name" value="SNX17-31_FERM_F2"/>
</dbReference>
<dbReference type="InterPro" id="IPR040842">
    <property type="entry name" value="SNX17/31_FERM"/>
</dbReference>
<dbReference type="PANTHER" id="PTHR12431">
    <property type="entry name" value="SORTING NEXIN 17 AND 27"/>
    <property type="match status" value="1"/>
</dbReference>
<dbReference type="PANTHER" id="PTHR12431:SF15">
    <property type="entry name" value="SORTING NEXIN-31"/>
    <property type="match status" value="1"/>
</dbReference>
<dbReference type="Pfam" id="PF00787">
    <property type="entry name" value="PX"/>
    <property type="match status" value="1"/>
</dbReference>
<dbReference type="Pfam" id="PF21273">
    <property type="entry name" value="SNX17-27-31_F1_FERM"/>
    <property type="match status" value="1"/>
</dbReference>
<dbReference type="Pfam" id="PF21271">
    <property type="entry name" value="SNX17-31_F2_FERM"/>
    <property type="match status" value="1"/>
</dbReference>
<dbReference type="Pfam" id="PF18116">
    <property type="entry name" value="SNX17_FERM_C"/>
    <property type="match status" value="1"/>
</dbReference>
<dbReference type="SMART" id="SM00312">
    <property type="entry name" value="PX"/>
    <property type="match status" value="1"/>
</dbReference>
<dbReference type="SUPFAM" id="SSF64268">
    <property type="entry name" value="PX domain"/>
    <property type="match status" value="1"/>
</dbReference>
<dbReference type="PROSITE" id="PS50195">
    <property type="entry name" value="PX"/>
    <property type="match status" value="1"/>
</dbReference>
<organism>
    <name type="scientific">Xenopus tropicalis</name>
    <name type="common">Western clawed frog</name>
    <name type="synonym">Silurana tropicalis</name>
    <dbReference type="NCBI Taxonomy" id="8364"/>
    <lineage>
        <taxon>Eukaryota</taxon>
        <taxon>Metazoa</taxon>
        <taxon>Chordata</taxon>
        <taxon>Craniata</taxon>
        <taxon>Vertebrata</taxon>
        <taxon>Euteleostomi</taxon>
        <taxon>Amphibia</taxon>
        <taxon>Batrachia</taxon>
        <taxon>Anura</taxon>
        <taxon>Pipoidea</taxon>
        <taxon>Pipidae</taxon>
        <taxon>Xenopodinae</taxon>
        <taxon>Xenopus</taxon>
        <taxon>Silurana</taxon>
    </lineage>
</organism>
<keyword id="KW-0653">Protein transport</keyword>
<keyword id="KW-1185">Reference proteome</keyword>
<keyword id="KW-0813">Transport</keyword>
<comment type="function">
    <text evidence="1">May be involved in protein trafficking.</text>
</comment>
<comment type="similarity">
    <text evidence="3">Belongs to the sorting nexin family.</text>
</comment>
<feature type="chain" id="PRO_0000331606" description="Sorting nexin-31">
    <location>
        <begin position="1"/>
        <end position="428"/>
    </location>
</feature>
<feature type="domain" description="PX" evidence="2">
    <location>
        <begin position="1"/>
        <end position="107"/>
    </location>
</feature>
<reference key="1">
    <citation type="submission" date="2006-10" db="EMBL/GenBank/DDBJ databases">
        <authorList>
            <consortium name="Sanger Xenopus tropicalis EST/cDNA project"/>
        </authorList>
    </citation>
    <scope>NUCLEOTIDE SEQUENCE [LARGE SCALE MRNA]</scope>
    <source>
        <tissue>Egg</tissue>
    </source>
</reference>
<sequence>MHICIPVTEELQDTLGCRFVLYSVYLEGFLLCKVRYKDLHLWNEQIYRVFGNRLPKFPPKYYLAMTKAMTNERRLQLEQYLQQIVSDPVVTSSEIFMEYFKKLQMDTFNMPTVQLILRIYMPDGAAVELDVQTSDSAERVLEAALFKLGVSRELGEYFSLFITHKEAKGPFTVVKRIAGFELPFLTIWNLEDDQFQIEVRKWYMNPSNDAMLMGSTEAIDLLYLQAVQEFQMEWTRPTKDQQQKLQHCLKQQNKLKFLELMKTVEYYGYLHITSCTSDYPECDSEVTIWVGNNEMSCHFYSPGGHAENLRLSIKDLICWNVTLLPKKQEVMSPNHQHLELKFDYQQGSSLKCITIHTEQAFLLSSCLKKMLSERPVHRCKEELEIQVDKATCKSNIRPEQNGVHAKKQALLKDKREYCVVDNISDLDL</sequence>
<evidence type="ECO:0000250" key="1"/>
<evidence type="ECO:0000255" key="2">
    <source>
        <dbReference type="PROSITE-ProRule" id="PRU00147"/>
    </source>
</evidence>
<evidence type="ECO:0000305" key="3"/>
<gene>
    <name type="primary">snx31</name>
    <name type="ORF">TEgg014m07.1</name>
</gene>